<sequence length="262" mass="29367">MINVFPVRAFRDNYIWIVHNQQFALIIDPGDATPVLTWLRQQKLQPIAILCTHHHHDHTGGISLLVQKFEIPVYGPASEKIPGMTHPLAEGDTLVFPELSLELSILDVPGHTAGHIACHGQNRLFCGDTLFACGCGRIFEGNAQQMFDSLQKLTDLPDETQVYCAHEYTLDNIRFARAIDPDNPELIELESNVEEKREQNMPTLPSSLAAEKATNPFLRCNQPAIIQSASRYAGRQLTDPVSVFAAIRDWKNNFRGNTDLPM</sequence>
<evidence type="ECO:0000255" key="1">
    <source>
        <dbReference type="HAMAP-Rule" id="MF_01374"/>
    </source>
</evidence>
<feature type="chain" id="PRO_1000144775" description="Hydroxyacylglutathione hydrolase">
    <location>
        <begin position="1"/>
        <end position="262"/>
    </location>
</feature>
<feature type="binding site" evidence="1">
    <location>
        <position position="53"/>
    </location>
    <ligand>
        <name>Zn(2+)</name>
        <dbReference type="ChEBI" id="CHEBI:29105"/>
        <label>1</label>
    </ligand>
</feature>
<feature type="binding site" evidence="1">
    <location>
        <position position="55"/>
    </location>
    <ligand>
        <name>Zn(2+)</name>
        <dbReference type="ChEBI" id="CHEBI:29105"/>
        <label>1</label>
    </ligand>
</feature>
<feature type="binding site" evidence="1">
    <location>
        <position position="57"/>
    </location>
    <ligand>
        <name>Zn(2+)</name>
        <dbReference type="ChEBI" id="CHEBI:29105"/>
        <label>2</label>
    </ligand>
</feature>
<feature type="binding site" evidence="1">
    <location>
        <position position="58"/>
    </location>
    <ligand>
        <name>Zn(2+)</name>
        <dbReference type="ChEBI" id="CHEBI:29105"/>
        <label>2</label>
    </ligand>
</feature>
<feature type="binding site" evidence="1">
    <location>
        <position position="111"/>
    </location>
    <ligand>
        <name>Zn(2+)</name>
        <dbReference type="ChEBI" id="CHEBI:29105"/>
        <label>1</label>
    </ligand>
</feature>
<feature type="binding site" evidence="1">
    <location>
        <position position="128"/>
    </location>
    <ligand>
        <name>Zn(2+)</name>
        <dbReference type="ChEBI" id="CHEBI:29105"/>
        <label>1</label>
    </ligand>
</feature>
<feature type="binding site" evidence="1">
    <location>
        <position position="128"/>
    </location>
    <ligand>
        <name>Zn(2+)</name>
        <dbReference type="ChEBI" id="CHEBI:29105"/>
        <label>2</label>
    </ligand>
</feature>
<feature type="binding site" evidence="1">
    <location>
        <position position="166"/>
    </location>
    <ligand>
        <name>Zn(2+)</name>
        <dbReference type="ChEBI" id="CHEBI:29105"/>
        <label>2</label>
    </ligand>
</feature>
<protein>
    <recommendedName>
        <fullName evidence="1">Hydroxyacylglutathione hydrolase</fullName>
        <ecNumber evidence="1">3.1.2.6</ecNumber>
    </recommendedName>
    <alternativeName>
        <fullName evidence="1">Glyoxalase II</fullName>
        <shortName evidence="1">Glx II</shortName>
    </alternativeName>
</protein>
<proteinExistence type="inferred from homology"/>
<organism>
    <name type="scientific">Nitrosomonas europaea (strain ATCC 19718 / CIP 103999 / KCTC 2705 / NBRC 14298)</name>
    <dbReference type="NCBI Taxonomy" id="228410"/>
    <lineage>
        <taxon>Bacteria</taxon>
        <taxon>Pseudomonadati</taxon>
        <taxon>Pseudomonadota</taxon>
        <taxon>Betaproteobacteria</taxon>
        <taxon>Nitrosomonadales</taxon>
        <taxon>Nitrosomonadaceae</taxon>
        <taxon>Nitrosomonas</taxon>
    </lineage>
</organism>
<keyword id="KW-0378">Hydrolase</keyword>
<keyword id="KW-0479">Metal-binding</keyword>
<keyword id="KW-1185">Reference proteome</keyword>
<keyword id="KW-0862">Zinc</keyword>
<reference key="1">
    <citation type="journal article" date="2003" name="J. Bacteriol.">
        <title>Complete genome sequence of the ammonia-oxidizing bacterium and obligate chemolithoautotroph Nitrosomonas europaea.</title>
        <authorList>
            <person name="Chain P."/>
            <person name="Lamerdin J.E."/>
            <person name="Larimer F.W."/>
            <person name="Regala W."/>
            <person name="Lao V."/>
            <person name="Land M.L."/>
            <person name="Hauser L."/>
            <person name="Hooper A.B."/>
            <person name="Klotz M.G."/>
            <person name="Norton J."/>
            <person name="Sayavedra-Soto L.A."/>
            <person name="Arciero D.M."/>
            <person name="Hommes N.G."/>
            <person name="Whittaker M.M."/>
            <person name="Arp D.J."/>
        </authorList>
    </citation>
    <scope>NUCLEOTIDE SEQUENCE [LARGE SCALE GENOMIC DNA]</scope>
    <source>
        <strain>ATCC 19718 / CIP 103999 / KCTC 2705 / NBRC 14298</strain>
    </source>
</reference>
<dbReference type="EC" id="3.1.2.6" evidence="1"/>
<dbReference type="EMBL" id="AL954747">
    <property type="protein sequence ID" value="CAD84049.1"/>
    <property type="molecule type" value="Genomic_DNA"/>
</dbReference>
<dbReference type="RefSeq" id="WP_011110785.1">
    <property type="nucleotide sequence ID" value="NC_004757.1"/>
</dbReference>
<dbReference type="SMR" id="Q82XW0"/>
<dbReference type="STRING" id="228410.NE0138"/>
<dbReference type="GeneID" id="87103349"/>
<dbReference type="KEGG" id="neu:NE0138"/>
<dbReference type="eggNOG" id="COG0491">
    <property type="taxonomic scope" value="Bacteria"/>
</dbReference>
<dbReference type="HOGENOM" id="CLU_030571_4_1_4"/>
<dbReference type="OrthoDB" id="9802248at2"/>
<dbReference type="PhylomeDB" id="Q82XW0"/>
<dbReference type="UniPathway" id="UPA00619">
    <property type="reaction ID" value="UER00676"/>
</dbReference>
<dbReference type="Proteomes" id="UP000001416">
    <property type="component" value="Chromosome"/>
</dbReference>
<dbReference type="GO" id="GO:0004416">
    <property type="term" value="F:hydroxyacylglutathione hydrolase activity"/>
    <property type="evidence" value="ECO:0007669"/>
    <property type="project" value="UniProtKB-UniRule"/>
</dbReference>
<dbReference type="GO" id="GO:0046872">
    <property type="term" value="F:metal ion binding"/>
    <property type="evidence" value="ECO:0007669"/>
    <property type="project" value="UniProtKB-KW"/>
</dbReference>
<dbReference type="GO" id="GO:0019243">
    <property type="term" value="P:methylglyoxal catabolic process to D-lactate via S-lactoyl-glutathione"/>
    <property type="evidence" value="ECO:0007669"/>
    <property type="project" value="InterPro"/>
</dbReference>
<dbReference type="CDD" id="cd07723">
    <property type="entry name" value="hydroxyacylglutathione_hydrolase_MBL-fold"/>
    <property type="match status" value="1"/>
</dbReference>
<dbReference type="Gene3D" id="3.60.15.10">
    <property type="entry name" value="Ribonuclease Z/Hydroxyacylglutathione hydrolase-like"/>
    <property type="match status" value="1"/>
</dbReference>
<dbReference type="HAMAP" id="MF_01374">
    <property type="entry name" value="Glyoxalase_2"/>
    <property type="match status" value="1"/>
</dbReference>
<dbReference type="InterPro" id="IPR035680">
    <property type="entry name" value="Clx_II_MBL"/>
</dbReference>
<dbReference type="InterPro" id="IPR050110">
    <property type="entry name" value="Glyoxalase_II_hydrolase"/>
</dbReference>
<dbReference type="InterPro" id="IPR032282">
    <property type="entry name" value="HAGH_C"/>
</dbReference>
<dbReference type="InterPro" id="IPR017782">
    <property type="entry name" value="Hydroxyacylglutathione_Hdrlase"/>
</dbReference>
<dbReference type="InterPro" id="IPR001279">
    <property type="entry name" value="Metallo-B-lactamas"/>
</dbReference>
<dbReference type="InterPro" id="IPR036866">
    <property type="entry name" value="RibonucZ/Hydroxyglut_hydro"/>
</dbReference>
<dbReference type="NCBIfam" id="TIGR03413">
    <property type="entry name" value="GSH_gloB"/>
    <property type="match status" value="1"/>
</dbReference>
<dbReference type="PANTHER" id="PTHR43705">
    <property type="entry name" value="HYDROXYACYLGLUTATHIONE HYDROLASE"/>
    <property type="match status" value="1"/>
</dbReference>
<dbReference type="PANTHER" id="PTHR43705:SF1">
    <property type="entry name" value="HYDROXYACYLGLUTATHIONE HYDROLASE GLOB"/>
    <property type="match status" value="1"/>
</dbReference>
<dbReference type="Pfam" id="PF16123">
    <property type="entry name" value="HAGH_C"/>
    <property type="match status" value="1"/>
</dbReference>
<dbReference type="Pfam" id="PF00753">
    <property type="entry name" value="Lactamase_B"/>
    <property type="match status" value="1"/>
</dbReference>
<dbReference type="PIRSF" id="PIRSF005457">
    <property type="entry name" value="Glx"/>
    <property type="match status" value="1"/>
</dbReference>
<dbReference type="SMART" id="SM00849">
    <property type="entry name" value="Lactamase_B"/>
    <property type="match status" value="1"/>
</dbReference>
<dbReference type="SUPFAM" id="SSF56281">
    <property type="entry name" value="Metallo-hydrolase/oxidoreductase"/>
    <property type="match status" value="1"/>
</dbReference>
<accession>Q82XW0</accession>
<gene>
    <name evidence="1" type="primary">gloB</name>
    <name type="ordered locus">NE0138</name>
</gene>
<name>GLO2_NITEU</name>
<comment type="function">
    <text evidence="1">Thiolesterase that catalyzes the hydrolysis of S-D-lactoyl-glutathione to form glutathione and D-lactic acid.</text>
</comment>
<comment type="catalytic activity">
    <reaction evidence="1">
        <text>an S-(2-hydroxyacyl)glutathione + H2O = a 2-hydroxy carboxylate + glutathione + H(+)</text>
        <dbReference type="Rhea" id="RHEA:21864"/>
        <dbReference type="ChEBI" id="CHEBI:15377"/>
        <dbReference type="ChEBI" id="CHEBI:15378"/>
        <dbReference type="ChEBI" id="CHEBI:57925"/>
        <dbReference type="ChEBI" id="CHEBI:58896"/>
        <dbReference type="ChEBI" id="CHEBI:71261"/>
        <dbReference type="EC" id="3.1.2.6"/>
    </reaction>
</comment>
<comment type="cofactor">
    <cofactor evidence="1">
        <name>Zn(2+)</name>
        <dbReference type="ChEBI" id="CHEBI:29105"/>
    </cofactor>
    <text evidence="1">Binds 2 Zn(2+) ions per subunit.</text>
</comment>
<comment type="pathway">
    <text evidence="1">Secondary metabolite metabolism; methylglyoxal degradation; (R)-lactate from methylglyoxal: step 2/2.</text>
</comment>
<comment type="subunit">
    <text evidence="1">Monomer.</text>
</comment>
<comment type="similarity">
    <text evidence="1">Belongs to the metallo-beta-lactamase superfamily. Glyoxalase II family.</text>
</comment>